<sequence length="321" mass="36634">MLFATLEHILTHISFSTISIVITIHLITLLVRELRGLRDSSEKGMIATFFSITGFLVSRWVSSGHFPLSNLYESLIFLSWTLYILHTIPKIQNSKNDLSTITTPSTILTQGFATSGLLTEMHQSTILVPALQSQWLMMHVSMMLLSYATLLCGSLLSAALLIIRFRNSFDFFSLKKNVLRKTFFFSEIEYLYAKRSALKNTSFPVFPNYYKYQLTERLDSWSYRVISLGFTLLTVGILCGAVWANEAWGSYWNWDPKETWAFITWTIFAIYLHSRTNPNWKGTNSALVASIGFLIIWICYFGINLLGIGLHSYGSFTLPSK</sequence>
<dbReference type="EMBL" id="AE009947">
    <property type="protein sequence ID" value="AAT44652.1"/>
    <property type="molecule type" value="Genomic_DNA"/>
</dbReference>
<dbReference type="SMR" id="Q6L3E1"/>
<dbReference type="GO" id="GO:0009535">
    <property type="term" value="C:chloroplast thylakoid membrane"/>
    <property type="evidence" value="ECO:0007669"/>
    <property type="project" value="UniProtKB-SubCell"/>
</dbReference>
<dbReference type="GO" id="GO:0005886">
    <property type="term" value="C:plasma membrane"/>
    <property type="evidence" value="ECO:0007669"/>
    <property type="project" value="TreeGrafter"/>
</dbReference>
<dbReference type="GO" id="GO:0020037">
    <property type="term" value="F:heme binding"/>
    <property type="evidence" value="ECO:0007669"/>
    <property type="project" value="InterPro"/>
</dbReference>
<dbReference type="GO" id="GO:0017004">
    <property type="term" value="P:cytochrome complex assembly"/>
    <property type="evidence" value="ECO:0007669"/>
    <property type="project" value="UniProtKB-UniRule"/>
</dbReference>
<dbReference type="HAMAP" id="MF_01391">
    <property type="entry name" value="CytC_CcsA"/>
    <property type="match status" value="1"/>
</dbReference>
<dbReference type="InterPro" id="IPR002541">
    <property type="entry name" value="Cyt_c_assembly"/>
</dbReference>
<dbReference type="InterPro" id="IPR017562">
    <property type="entry name" value="Cyt_c_biogenesis_CcsA"/>
</dbReference>
<dbReference type="InterPro" id="IPR045062">
    <property type="entry name" value="Cyt_c_biogenesis_CcsA/CcmC"/>
</dbReference>
<dbReference type="NCBIfam" id="TIGR03144">
    <property type="entry name" value="cytochr_II_ccsB"/>
    <property type="match status" value="1"/>
</dbReference>
<dbReference type="PANTHER" id="PTHR30071:SF1">
    <property type="entry name" value="CYTOCHROME B_B6 PROTEIN-RELATED"/>
    <property type="match status" value="1"/>
</dbReference>
<dbReference type="PANTHER" id="PTHR30071">
    <property type="entry name" value="HEME EXPORTER PROTEIN C"/>
    <property type="match status" value="1"/>
</dbReference>
<dbReference type="Pfam" id="PF01578">
    <property type="entry name" value="Cytochrom_C_asm"/>
    <property type="match status" value="1"/>
</dbReference>
<organism>
    <name type="scientific">Saccharum hybrid</name>
    <name type="common">Sugarcane</name>
    <dbReference type="NCBI Taxonomy" id="15819"/>
    <lineage>
        <taxon>Eukaryota</taxon>
        <taxon>Viridiplantae</taxon>
        <taxon>Streptophyta</taxon>
        <taxon>Embryophyta</taxon>
        <taxon>Tracheophyta</taxon>
        <taxon>Spermatophyta</taxon>
        <taxon>Magnoliopsida</taxon>
        <taxon>Liliopsida</taxon>
        <taxon>Poales</taxon>
        <taxon>Poaceae</taxon>
        <taxon>PACMAD clade</taxon>
        <taxon>Panicoideae</taxon>
        <taxon>Andropogonodae</taxon>
        <taxon>Andropogoneae</taxon>
        <taxon>Saccharinae</taxon>
        <taxon>Saccharum</taxon>
    </lineage>
</organism>
<gene>
    <name evidence="1" type="primary">ccsA</name>
    <name type="ordered locus">PS041</name>
</gene>
<reference key="1">
    <citation type="journal article" date="2004" name="Curr. Genet.">
        <title>Structural features and transcript-editing analysis of sugarcane (Saccharum officinarum L.) chloroplast genome.</title>
        <authorList>
            <person name="Calsa T. Jr."/>
            <person name="Carraro D.M."/>
            <person name="Benatti M.R."/>
            <person name="Barbosa A.C."/>
            <person name="Kitajima J.P."/>
            <person name="Carrer H."/>
        </authorList>
    </citation>
    <scope>NUCLEOTIDE SEQUENCE [LARGE SCALE GENOMIC DNA]</scope>
    <source>
        <strain>cv. SP-80-3280</strain>
    </source>
</reference>
<geneLocation type="chloroplast"/>
<name>CCSA_SACHY</name>
<keyword id="KW-0150">Chloroplast</keyword>
<keyword id="KW-0201">Cytochrome c-type biogenesis</keyword>
<keyword id="KW-0472">Membrane</keyword>
<keyword id="KW-0934">Plastid</keyword>
<keyword id="KW-0793">Thylakoid</keyword>
<keyword id="KW-0812">Transmembrane</keyword>
<keyword id="KW-1133">Transmembrane helix</keyword>
<evidence type="ECO:0000255" key="1">
    <source>
        <dbReference type="HAMAP-Rule" id="MF_01391"/>
    </source>
</evidence>
<accession>Q6L3E1</accession>
<proteinExistence type="inferred from homology"/>
<feature type="chain" id="PRO_0000226904" description="Cytochrome c biogenesis protein CcsA">
    <location>
        <begin position="1"/>
        <end position="321"/>
    </location>
</feature>
<feature type="transmembrane region" description="Helical" evidence="1">
    <location>
        <begin position="9"/>
        <end position="29"/>
    </location>
</feature>
<feature type="transmembrane region" description="Helical" evidence="1">
    <location>
        <begin position="44"/>
        <end position="64"/>
    </location>
</feature>
<feature type="transmembrane region" description="Helical" evidence="1">
    <location>
        <begin position="68"/>
        <end position="88"/>
    </location>
</feature>
<feature type="transmembrane region" description="Helical" evidence="1">
    <location>
        <begin position="143"/>
        <end position="163"/>
    </location>
</feature>
<feature type="transmembrane region" description="Helical" evidence="1">
    <location>
        <begin position="225"/>
        <end position="245"/>
    </location>
</feature>
<feature type="transmembrane region" description="Helical" evidence="1">
    <location>
        <begin position="259"/>
        <end position="273"/>
    </location>
</feature>
<feature type="transmembrane region" description="Helical" evidence="1">
    <location>
        <begin position="288"/>
        <end position="308"/>
    </location>
</feature>
<comment type="function">
    <text evidence="1">Required during biogenesis of c-type cytochromes (cytochrome c6 and cytochrome f) at the step of heme attachment.</text>
</comment>
<comment type="subunit">
    <text evidence="1">May interact with Ccs1.</text>
</comment>
<comment type="subcellular location">
    <subcellularLocation>
        <location evidence="1">Plastid</location>
        <location evidence="1">Chloroplast thylakoid membrane</location>
        <topology evidence="1">Multi-pass membrane protein</topology>
    </subcellularLocation>
</comment>
<comment type="similarity">
    <text evidence="1">Belongs to the CcmF/CycK/Ccl1/NrfE/CcsA family.</text>
</comment>
<protein>
    <recommendedName>
        <fullName evidence="1">Cytochrome c biogenesis protein CcsA</fullName>
    </recommendedName>
</protein>